<feature type="chain" id="PRO_0000053394" description="Neuroglobin">
    <location>
        <begin position="1"/>
        <end position="151"/>
    </location>
</feature>
<feature type="domain" description="Globin" evidence="3">
    <location>
        <begin position="1"/>
        <end position="149"/>
    </location>
</feature>
<feature type="binding site" description="distal binding residue; reversible" evidence="2 3">
    <location>
        <position position="64"/>
    </location>
    <ligand>
        <name>heme b</name>
        <dbReference type="ChEBI" id="CHEBI:60344"/>
    </ligand>
    <ligandPart>
        <name>Fe</name>
        <dbReference type="ChEBI" id="CHEBI:18248"/>
    </ligandPart>
</feature>
<feature type="binding site" description="proximal binding residue" evidence="2 3">
    <location>
        <position position="96"/>
    </location>
    <ligand>
        <name>heme b</name>
        <dbReference type="ChEBI" id="CHEBI:60344"/>
    </ligand>
    <ligandPart>
        <name>Fe</name>
        <dbReference type="ChEBI" id="CHEBI:18248"/>
    </ligandPart>
</feature>
<evidence type="ECO:0000250" key="1">
    <source>
        <dbReference type="UniProtKB" id="Q9ER97"/>
    </source>
</evidence>
<evidence type="ECO:0000250" key="2">
    <source>
        <dbReference type="UniProtKB" id="Q9NPG2"/>
    </source>
</evidence>
<evidence type="ECO:0000255" key="3">
    <source>
        <dbReference type="PROSITE-ProRule" id="PRU00238"/>
    </source>
</evidence>
<evidence type="ECO:0000303" key="4">
    <source>
    </source>
</evidence>
<gene>
    <name evidence="2" type="primary">NGB</name>
</gene>
<keyword id="KW-0963">Cytoplasm</keyword>
<keyword id="KW-1015">Disulfide bond</keyword>
<keyword id="KW-0349">Heme</keyword>
<keyword id="KW-0408">Iron</keyword>
<keyword id="KW-0479">Metal-binding</keyword>
<keyword id="KW-0496">Mitochondrion</keyword>
<keyword id="KW-0560">Oxidoreductase</keyword>
<keyword id="KW-1185">Reference proteome</keyword>
<protein>
    <recommendedName>
        <fullName evidence="4">Neuroglobin</fullName>
    </recommendedName>
    <alternativeName>
        <fullName evidence="2">Nitrite reductase</fullName>
        <ecNumber evidence="2">1.7.-.-</ecNumber>
    </alternativeName>
</protein>
<comment type="function">
    <text evidence="2">Monomeric globin with a bis-histidyl six-coordinate heme-iron atom through which it can bind dioxygen, carbon monoxide and nitric oxide. Could help transport oxygen and increase its availability to the metabolically active neuronal tissues, though its low quantity in tissues as well as its high affinity for dioxygen, which may limit its oxygen-releasing ability, argue against it. The ferrous/deoxygenated form exhibits a nitrite reductase activity and it could produce nitric oxide which in turn inhibits cellular respiration in response to hypoxia. In its ferrous/deoxygenated state, it may also exhibit GDI (Guanine nucleotide Dissociation Inhibitor) activity toward heterotrimeric G-alpha proteins, thereby regulating signal transduction to facilitate neuroprotective responses in the wake of hypoxia and associated oxidative stress.</text>
</comment>
<comment type="catalytic activity">
    <reaction evidence="2">
        <text>Fe(III)-heme b-[protein] + nitric oxide + H2O = Fe(II)-heme b-[protein] + nitrite + 2 H(+)</text>
        <dbReference type="Rhea" id="RHEA:77711"/>
        <dbReference type="Rhea" id="RHEA-COMP:18975"/>
        <dbReference type="Rhea" id="RHEA-COMP:18976"/>
        <dbReference type="ChEBI" id="CHEBI:15377"/>
        <dbReference type="ChEBI" id="CHEBI:15378"/>
        <dbReference type="ChEBI" id="CHEBI:16301"/>
        <dbReference type="ChEBI" id="CHEBI:16480"/>
        <dbReference type="ChEBI" id="CHEBI:55376"/>
        <dbReference type="ChEBI" id="CHEBI:60344"/>
    </reaction>
    <physiologicalReaction direction="right-to-left" evidence="2">
        <dbReference type="Rhea" id="RHEA:77713"/>
    </physiologicalReaction>
</comment>
<comment type="subunit">
    <text evidence="1 2">Monomer (By similarity). Homodimer and homotetramer; disulfide-linked. Mainly monomeric but also detected as part of homodimers and homotetramers (By similarity). Interacts with 14-3-3 proteins; regulates the phosphorylation of NGB. Could interact (ferrous form) with G-alpha(i) proteins (GTP-bound form) (By similarity).</text>
</comment>
<comment type="subcellular location">
    <subcellularLocation>
        <location evidence="1">Cytoplasm</location>
        <location evidence="1">Cytosol</location>
    </subcellularLocation>
    <subcellularLocation>
        <location evidence="1">Mitochondrion matrix</location>
    </subcellularLocation>
    <text evidence="1">Enriched in mitochondrial matrix upon oxygen-glucose deprivation.</text>
</comment>
<comment type="PTM">
    <text evidence="2">Phosphorylated during hypoxia by ERK1/ERK2. Phosphorylation regulates the heme pocket hexacoordination preventing the association of His-64 with the heme metal center. Thereby, promotes the access of dioxygen and nitrite to the heme and stimulates the nitrite reductase activity. Phosphorylation during hypoxia is stabilized by 14-3-3 proteins.</text>
</comment>
<comment type="similarity">
    <text evidence="3">Belongs to the globin family.</text>
</comment>
<proteinExistence type="evidence at transcript level"/>
<name>NGB_PANTR</name>
<sequence>MERPEPELIRQSWRAVSRSPLEHGTVLFARLFALEPDLLPLFQYNCRQFSSPEDCLSSPEFLDHIRKVMLVIDAAVTNVEDLSSLEEYLASLGRKHRAVGVKLSSFSTVGESLLYMLEKCLGPAFTPATRAAWSQLYGAVVQAMSRGWDGE</sequence>
<accession>Q3KN66</accession>
<reference key="1">
    <citation type="journal article" date="2005" name="Nature">
        <title>Initial sequence of the chimpanzee genome and comparison with the human genome.</title>
        <authorList>
            <consortium name="Chimpanzee sequencing and analysis consortium"/>
        </authorList>
    </citation>
    <scope>NUCLEOTIDE SEQUENCE [LARGE SCALE GENOMIC DNA]</scope>
</reference>
<reference key="2">
    <citation type="journal article" date="2004" name="IUBMB Life">
        <title>Neuroglobin and cytoglobin: genes, proteins and evolution.</title>
        <authorList>
            <person name="Burmester T."/>
            <person name="Haberkamp M."/>
            <person name="Mitz S."/>
            <person name="Roesner A."/>
            <person name="Schmidt M."/>
            <person name="Ebner B."/>
            <person name="Gerlach F."/>
            <person name="Fuchs C."/>
            <person name="Hankeln T."/>
        </authorList>
    </citation>
    <scope>IDENTIFICATION</scope>
</reference>
<dbReference type="EC" id="1.7.-.-" evidence="2"/>
<dbReference type="EMBL" id="AADA01016196">
    <property type="status" value="NOT_ANNOTATED_CDS"/>
    <property type="molecule type" value="Genomic_DNA"/>
</dbReference>
<dbReference type="EMBL" id="BN000825">
    <property type="protein sequence ID" value="CAJ30481.1"/>
    <property type="molecule type" value="mRNA"/>
</dbReference>
<dbReference type="RefSeq" id="NP_001030585.1">
    <property type="nucleotide sequence ID" value="NM_001035508.1"/>
</dbReference>
<dbReference type="BMRB" id="Q3KN66"/>
<dbReference type="SMR" id="Q3KN66"/>
<dbReference type="FunCoup" id="Q3KN66">
    <property type="interactions" value="68"/>
</dbReference>
<dbReference type="STRING" id="9598.ENSPTRP00000011169"/>
<dbReference type="PaxDb" id="9598-ENSPTRP00000011169"/>
<dbReference type="Ensembl" id="ENSPTRT00000012061.5">
    <property type="protein sequence ID" value="ENSPTRP00000011169.4"/>
    <property type="gene ID" value="ENSPTRG00000006575.5"/>
</dbReference>
<dbReference type="GeneID" id="467518"/>
<dbReference type="KEGG" id="ptr:467518"/>
<dbReference type="CTD" id="58157"/>
<dbReference type="VGNC" id="VGNC:12565">
    <property type="gene designation" value="NGB"/>
</dbReference>
<dbReference type="eggNOG" id="KOG3378">
    <property type="taxonomic scope" value="Eukaryota"/>
</dbReference>
<dbReference type="GeneTree" id="ENSGT00510000048375"/>
<dbReference type="HOGENOM" id="CLU_003827_13_5_1"/>
<dbReference type="InParanoid" id="Q3KN66"/>
<dbReference type="OMA" id="GRKLMAM"/>
<dbReference type="OrthoDB" id="1916at9604"/>
<dbReference type="TreeFam" id="TF333247"/>
<dbReference type="Proteomes" id="UP000002277">
    <property type="component" value="Chromosome 14"/>
</dbReference>
<dbReference type="Bgee" id="ENSPTRG00000006575">
    <property type="expression patterns" value="Expressed in dorsolateral prefrontal cortex and 7 other cell types or tissues"/>
</dbReference>
<dbReference type="GO" id="GO:0005829">
    <property type="term" value="C:cytosol"/>
    <property type="evidence" value="ECO:0007669"/>
    <property type="project" value="UniProtKB-SubCell"/>
</dbReference>
<dbReference type="GO" id="GO:0005759">
    <property type="term" value="C:mitochondrial matrix"/>
    <property type="evidence" value="ECO:0007669"/>
    <property type="project" value="UniProtKB-SubCell"/>
</dbReference>
<dbReference type="GO" id="GO:0005092">
    <property type="term" value="F:GDP-dissociation inhibitor activity"/>
    <property type="evidence" value="ECO:0000250"/>
    <property type="project" value="UniProtKB"/>
</dbReference>
<dbReference type="GO" id="GO:0020037">
    <property type="term" value="F:heme binding"/>
    <property type="evidence" value="ECO:0007669"/>
    <property type="project" value="InterPro"/>
</dbReference>
<dbReference type="GO" id="GO:0046872">
    <property type="term" value="F:metal ion binding"/>
    <property type="evidence" value="ECO:0007669"/>
    <property type="project" value="UniProtKB-KW"/>
</dbReference>
<dbReference type="GO" id="GO:0098809">
    <property type="term" value="F:nitrite reductase activity"/>
    <property type="evidence" value="ECO:0000250"/>
    <property type="project" value="UniProtKB"/>
</dbReference>
<dbReference type="GO" id="GO:0019825">
    <property type="term" value="F:oxygen binding"/>
    <property type="evidence" value="ECO:0000250"/>
    <property type="project" value="UniProtKB"/>
</dbReference>
<dbReference type="GO" id="GO:0005344">
    <property type="term" value="F:oxygen carrier activity"/>
    <property type="evidence" value="ECO:0000318"/>
    <property type="project" value="GO_Central"/>
</dbReference>
<dbReference type="GO" id="GO:0071456">
    <property type="term" value="P:cellular response to hypoxia"/>
    <property type="evidence" value="ECO:0000250"/>
    <property type="project" value="UniProtKB"/>
</dbReference>
<dbReference type="GO" id="GO:0015671">
    <property type="term" value="P:oxygen transport"/>
    <property type="evidence" value="ECO:0000318"/>
    <property type="project" value="GO_Central"/>
</dbReference>
<dbReference type="GO" id="GO:0001666">
    <property type="term" value="P:response to hypoxia"/>
    <property type="evidence" value="ECO:0000318"/>
    <property type="project" value="GO_Central"/>
</dbReference>
<dbReference type="CDD" id="cd08920">
    <property type="entry name" value="Ngb"/>
    <property type="match status" value="1"/>
</dbReference>
<dbReference type="FunFam" id="1.10.490.10:FF:000006">
    <property type="entry name" value="Neuroglobin"/>
    <property type="match status" value="1"/>
</dbReference>
<dbReference type="Gene3D" id="1.10.490.10">
    <property type="entry name" value="Globins"/>
    <property type="match status" value="1"/>
</dbReference>
<dbReference type="InterPro" id="IPR000971">
    <property type="entry name" value="Globin"/>
</dbReference>
<dbReference type="InterPro" id="IPR050532">
    <property type="entry name" value="Globin-like_OT"/>
</dbReference>
<dbReference type="InterPro" id="IPR009050">
    <property type="entry name" value="Globin-like_sf"/>
</dbReference>
<dbReference type="InterPro" id="IPR012292">
    <property type="entry name" value="Globin/Proto"/>
</dbReference>
<dbReference type="PANTHER" id="PTHR46458">
    <property type="entry name" value="BLR2807 PROTEIN"/>
    <property type="match status" value="1"/>
</dbReference>
<dbReference type="PANTHER" id="PTHR46458:SF19">
    <property type="entry name" value="NEUROGLOBIN"/>
    <property type="match status" value="1"/>
</dbReference>
<dbReference type="Pfam" id="PF00042">
    <property type="entry name" value="Globin"/>
    <property type="match status" value="1"/>
</dbReference>
<dbReference type="SUPFAM" id="SSF46458">
    <property type="entry name" value="Globin-like"/>
    <property type="match status" value="1"/>
</dbReference>
<dbReference type="PROSITE" id="PS01033">
    <property type="entry name" value="GLOBIN"/>
    <property type="match status" value="1"/>
</dbReference>
<organism>
    <name type="scientific">Pan troglodytes</name>
    <name type="common">Chimpanzee</name>
    <dbReference type="NCBI Taxonomy" id="9598"/>
    <lineage>
        <taxon>Eukaryota</taxon>
        <taxon>Metazoa</taxon>
        <taxon>Chordata</taxon>
        <taxon>Craniata</taxon>
        <taxon>Vertebrata</taxon>
        <taxon>Euteleostomi</taxon>
        <taxon>Mammalia</taxon>
        <taxon>Eutheria</taxon>
        <taxon>Euarchontoglires</taxon>
        <taxon>Primates</taxon>
        <taxon>Haplorrhini</taxon>
        <taxon>Catarrhini</taxon>
        <taxon>Hominidae</taxon>
        <taxon>Pan</taxon>
    </lineage>
</organism>